<keyword id="KW-0963">Cytoplasm</keyword>
<keyword id="KW-0274">FAD</keyword>
<keyword id="KW-0285">Flavoprotein</keyword>
<keyword id="KW-0520">NAD</keyword>
<keyword id="KW-0819">tRNA processing</keyword>
<evidence type="ECO:0000255" key="1">
    <source>
        <dbReference type="HAMAP-Rule" id="MF_00129"/>
    </source>
</evidence>
<feature type="chain" id="PRO_0000117045" description="tRNA uridine 5-carboxymethylaminomethyl modification enzyme MnmG">
    <location>
        <begin position="1"/>
        <end position="637"/>
    </location>
</feature>
<feature type="binding site" evidence="1">
    <location>
        <begin position="19"/>
        <end position="24"/>
    </location>
    <ligand>
        <name>FAD</name>
        <dbReference type="ChEBI" id="CHEBI:57692"/>
    </ligand>
</feature>
<feature type="binding site" evidence="1">
    <location>
        <position position="131"/>
    </location>
    <ligand>
        <name>FAD</name>
        <dbReference type="ChEBI" id="CHEBI:57692"/>
    </ligand>
</feature>
<feature type="binding site" evidence="1">
    <location>
        <position position="191"/>
    </location>
    <ligand>
        <name>FAD</name>
        <dbReference type="ChEBI" id="CHEBI:57692"/>
    </ligand>
</feature>
<feature type="binding site" evidence="1">
    <location>
        <begin position="283"/>
        <end position="297"/>
    </location>
    <ligand>
        <name>NAD(+)</name>
        <dbReference type="ChEBI" id="CHEBI:57540"/>
    </ligand>
</feature>
<feature type="binding site" evidence="1">
    <location>
        <position position="380"/>
    </location>
    <ligand>
        <name>FAD</name>
        <dbReference type="ChEBI" id="CHEBI:57692"/>
    </ligand>
</feature>
<protein>
    <recommendedName>
        <fullName evidence="1">tRNA uridine 5-carboxymethylaminomethyl modification enzyme MnmG</fullName>
    </recommendedName>
    <alternativeName>
        <fullName evidence="1">Glucose-inhibited division protein A</fullName>
    </alternativeName>
</protein>
<accession>Q5PA19</accession>
<organism>
    <name type="scientific">Anaplasma marginale (strain St. Maries)</name>
    <dbReference type="NCBI Taxonomy" id="234826"/>
    <lineage>
        <taxon>Bacteria</taxon>
        <taxon>Pseudomonadati</taxon>
        <taxon>Pseudomonadota</taxon>
        <taxon>Alphaproteobacteria</taxon>
        <taxon>Rickettsiales</taxon>
        <taxon>Anaplasmataceae</taxon>
        <taxon>Anaplasma</taxon>
    </lineage>
</organism>
<name>MNMG_ANAMM</name>
<comment type="function">
    <text evidence="1">NAD-binding protein involved in the addition of a carboxymethylaminomethyl (cmnm) group at the wobble position (U34) of certain tRNAs, forming tRNA-cmnm(5)s(2)U34.</text>
</comment>
<comment type="cofactor">
    <cofactor evidence="1">
        <name>FAD</name>
        <dbReference type="ChEBI" id="CHEBI:57692"/>
    </cofactor>
</comment>
<comment type="subunit">
    <text evidence="1">Homodimer. Heterotetramer of two MnmE and two MnmG subunits.</text>
</comment>
<comment type="subcellular location">
    <subcellularLocation>
        <location evidence="1">Cytoplasm</location>
    </subcellularLocation>
</comment>
<comment type="similarity">
    <text evidence="1">Belongs to the MnmG family.</text>
</comment>
<sequence length="637" mass="69320">MFDIIWLVVVLSYDVVVVGGGHAGCEAAAAAARVGAKTLLITHKIGSIGEMSCNPAIGGVAKGVVVREVDALDGLMGQAIDKASIHSTILNQSKGPAVWGPRAQADRDAYRTAMQDIVLGYKNLEVLEASVIDFSTDNEAGSPCVASVTLSCGKVLHTRRLVLATGTFLGGMIHVGRDKGIPAGRMGDKPSTRLAKALCAHGFMLGRLKTGTPPRIDRSSIDWSATAEQKGDLVPTPFSFLSDAIVLPQVSCYITHTNTKTHEIVRNNLHLAASCASLVDVAAPRYCPSIEEKVRRFPEHKSHQVFLEPEGLDSNSVYPNGVSTSCPIDVQLEMLRSIRGLENVRMLRHGYTVEYNFVDPRELHHTLETKKIKGLYFAGQINGTTGYEEAAGQGIVAGANAALSLSQNHAPFVLKRSEAYIGVMIDDLVTLGTSEPYRLFTSRAEYRLRLRSDNADMRLTEMGYNAGLVSERRFGVLYNKKQEMDRLVDELHRTSITPHTLSKCGIFISQNGEKKTAFELLGHPSITMDILIQLWPSLNSFSRAALAAVGIEGKYAPYLQRQAADIQSFLEEENASIPADIRYSEVHGLSKEAQEKLQRAQPFSIGAARRIPGITPAAIANIIIHLRCRGRASHQNS</sequence>
<reference key="1">
    <citation type="journal article" date="2005" name="Proc. Natl. Acad. Sci. U.S.A.">
        <title>Complete genome sequencing of Anaplasma marginale reveals that the surface is skewed to two superfamilies of outer membrane proteins.</title>
        <authorList>
            <person name="Brayton K.A."/>
            <person name="Kappmeyer L.S."/>
            <person name="Herndon D.R."/>
            <person name="Dark M.J."/>
            <person name="Tibbals D.L."/>
            <person name="Palmer G.H."/>
            <person name="McGuire T.C."/>
            <person name="Knowles D.P. Jr."/>
        </authorList>
    </citation>
    <scope>NUCLEOTIDE SEQUENCE [LARGE SCALE GENOMIC DNA]</scope>
    <source>
        <strain>St. Maries</strain>
    </source>
</reference>
<gene>
    <name evidence="1" type="primary">mnmG</name>
    <name evidence="1" type="synonym">gidA</name>
    <name type="ordered locus">AM961</name>
</gene>
<dbReference type="EMBL" id="CP000030">
    <property type="protein sequence ID" value="AAV86861.1"/>
    <property type="molecule type" value="Genomic_DNA"/>
</dbReference>
<dbReference type="RefSeq" id="WP_011114518.1">
    <property type="nucleotide sequence ID" value="NC_004842.2"/>
</dbReference>
<dbReference type="SMR" id="Q5PA19"/>
<dbReference type="KEGG" id="ama:AM961"/>
<dbReference type="HOGENOM" id="CLU_007831_2_2_5"/>
<dbReference type="GO" id="GO:0005829">
    <property type="term" value="C:cytosol"/>
    <property type="evidence" value="ECO:0007669"/>
    <property type="project" value="TreeGrafter"/>
</dbReference>
<dbReference type="GO" id="GO:0050660">
    <property type="term" value="F:flavin adenine dinucleotide binding"/>
    <property type="evidence" value="ECO:0007669"/>
    <property type="project" value="UniProtKB-UniRule"/>
</dbReference>
<dbReference type="GO" id="GO:0030488">
    <property type="term" value="P:tRNA methylation"/>
    <property type="evidence" value="ECO:0007669"/>
    <property type="project" value="TreeGrafter"/>
</dbReference>
<dbReference type="GO" id="GO:0002098">
    <property type="term" value="P:tRNA wobble uridine modification"/>
    <property type="evidence" value="ECO:0007669"/>
    <property type="project" value="InterPro"/>
</dbReference>
<dbReference type="FunFam" id="1.10.150.570:FF:000001">
    <property type="entry name" value="tRNA uridine 5-carboxymethylaminomethyl modification enzyme MnmG"/>
    <property type="match status" value="1"/>
</dbReference>
<dbReference type="FunFam" id="3.50.50.60:FF:000002">
    <property type="entry name" value="tRNA uridine 5-carboxymethylaminomethyl modification enzyme MnmG"/>
    <property type="match status" value="1"/>
</dbReference>
<dbReference type="Gene3D" id="3.50.50.60">
    <property type="entry name" value="FAD/NAD(P)-binding domain"/>
    <property type="match status" value="2"/>
</dbReference>
<dbReference type="Gene3D" id="1.10.150.570">
    <property type="entry name" value="GidA associated domain, C-terminal subdomain"/>
    <property type="match status" value="1"/>
</dbReference>
<dbReference type="Gene3D" id="1.10.10.1800">
    <property type="entry name" value="tRNA uridine 5-carboxymethylaminomethyl modification enzyme MnmG/GidA"/>
    <property type="match status" value="1"/>
</dbReference>
<dbReference type="HAMAP" id="MF_00129">
    <property type="entry name" value="MnmG_GidA"/>
    <property type="match status" value="1"/>
</dbReference>
<dbReference type="InterPro" id="IPR036188">
    <property type="entry name" value="FAD/NAD-bd_sf"/>
</dbReference>
<dbReference type="InterPro" id="IPR049312">
    <property type="entry name" value="GIDA_C_N"/>
</dbReference>
<dbReference type="InterPro" id="IPR004416">
    <property type="entry name" value="MnmG"/>
</dbReference>
<dbReference type="InterPro" id="IPR002218">
    <property type="entry name" value="MnmG-rel"/>
</dbReference>
<dbReference type="InterPro" id="IPR020595">
    <property type="entry name" value="MnmG-rel_CS"/>
</dbReference>
<dbReference type="InterPro" id="IPR026904">
    <property type="entry name" value="MnmG_C"/>
</dbReference>
<dbReference type="InterPro" id="IPR047001">
    <property type="entry name" value="MnmG_C_subdom"/>
</dbReference>
<dbReference type="InterPro" id="IPR044920">
    <property type="entry name" value="MnmG_C_subdom_sf"/>
</dbReference>
<dbReference type="InterPro" id="IPR040131">
    <property type="entry name" value="MnmG_N"/>
</dbReference>
<dbReference type="NCBIfam" id="TIGR00136">
    <property type="entry name" value="mnmG_gidA"/>
    <property type="match status" value="1"/>
</dbReference>
<dbReference type="PANTHER" id="PTHR11806">
    <property type="entry name" value="GLUCOSE INHIBITED DIVISION PROTEIN A"/>
    <property type="match status" value="1"/>
</dbReference>
<dbReference type="PANTHER" id="PTHR11806:SF0">
    <property type="entry name" value="PROTEIN MTO1 HOMOLOG, MITOCHONDRIAL"/>
    <property type="match status" value="1"/>
</dbReference>
<dbReference type="Pfam" id="PF01134">
    <property type="entry name" value="GIDA"/>
    <property type="match status" value="1"/>
</dbReference>
<dbReference type="Pfam" id="PF21680">
    <property type="entry name" value="GIDA_C_1st"/>
    <property type="match status" value="1"/>
</dbReference>
<dbReference type="Pfam" id="PF13932">
    <property type="entry name" value="SAM_GIDA_C"/>
    <property type="match status" value="1"/>
</dbReference>
<dbReference type="PRINTS" id="PR00411">
    <property type="entry name" value="PNDRDTASEI"/>
</dbReference>
<dbReference type="SMART" id="SM01228">
    <property type="entry name" value="GIDA_assoc_3"/>
    <property type="match status" value="1"/>
</dbReference>
<dbReference type="SUPFAM" id="SSF51905">
    <property type="entry name" value="FAD/NAD(P)-binding domain"/>
    <property type="match status" value="1"/>
</dbReference>
<dbReference type="PROSITE" id="PS01280">
    <property type="entry name" value="GIDA_1"/>
    <property type="match status" value="1"/>
</dbReference>
<dbReference type="PROSITE" id="PS01281">
    <property type="entry name" value="GIDA_2"/>
    <property type="match status" value="1"/>
</dbReference>
<proteinExistence type="inferred from homology"/>